<protein>
    <recommendedName>
        <fullName>Hydrogenase-4 component D</fullName>
        <ecNumber>1.-.-.-</ecNumber>
    </recommendedName>
</protein>
<keyword id="KW-0997">Cell inner membrane</keyword>
<keyword id="KW-1003">Cell membrane</keyword>
<keyword id="KW-0472">Membrane</keyword>
<keyword id="KW-0560">Oxidoreductase</keyword>
<keyword id="KW-1185">Reference proteome</keyword>
<keyword id="KW-0812">Transmembrane</keyword>
<keyword id="KW-1133">Transmembrane helix</keyword>
<proteinExistence type="inferred from homology"/>
<comment type="function">
    <text evidence="5">Possible component of hydrogenase 4.</text>
</comment>
<comment type="subcellular location">
    <subcellularLocation>
        <location evidence="2">Cell inner membrane</location>
        <topology evidence="2">Multi-pass membrane protein</topology>
    </subcellularLocation>
</comment>
<comment type="similarity">
    <text evidence="4">Belongs to the complex I subunit 5 family.</text>
</comment>
<name>HYFD_ECOLI</name>
<dbReference type="EC" id="1.-.-.-"/>
<dbReference type="EMBL" id="M63654">
    <property type="protein sequence ID" value="AAB88566.1"/>
    <property type="molecule type" value="Genomic_DNA"/>
</dbReference>
<dbReference type="EMBL" id="U00096">
    <property type="protein sequence ID" value="AAC75537.1"/>
    <property type="molecule type" value="Genomic_DNA"/>
</dbReference>
<dbReference type="EMBL" id="AP009048">
    <property type="protein sequence ID" value="BAA16372.1"/>
    <property type="molecule type" value="Genomic_DNA"/>
</dbReference>
<dbReference type="PIR" id="C65024">
    <property type="entry name" value="C65024"/>
</dbReference>
<dbReference type="RefSeq" id="NP_416979.1">
    <property type="nucleotide sequence ID" value="NC_000913.3"/>
</dbReference>
<dbReference type="RefSeq" id="WP_000429104.1">
    <property type="nucleotide sequence ID" value="NZ_LN832404.1"/>
</dbReference>
<dbReference type="SMR" id="P77416"/>
<dbReference type="BioGRID" id="4259198">
    <property type="interactions" value="19"/>
</dbReference>
<dbReference type="ComplexPortal" id="CPX-6028">
    <property type="entry name" value="Formate hydrogenlyase-H/Hydrogenase-4 complex"/>
</dbReference>
<dbReference type="FunCoup" id="P77416">
    <property type="interactions" value="122"/>
</dbReference>
<dbReference type="STRING" id="511145.b2484"/>
<dbReference type="TCDB" id="3.D.1.9.1">
    <property type="family name" value="the h+ or na+-translocating nadh dehydrogenase (ndh) family"/>
</dbReference>
<dbReference type="PaxDb" id="511145-b2484"/>
<dbReference type="DNASU" id="947290"/>
<dbReference type="EnsemblBacteria" id="AAC75537">
    <property type="protein sequence ID" value="AAC75537"/>
    <property type="gene ID" value="b2484"/>
</dbReference>
<dbReference type="GeneID" id="947290"/>
<dbReference type="KEGG" id="ecj:JW2469"/>
<dbReference type="KEGG" id="eco:b2484"/>
<dbReference type="KEGG" id="ecoc:C3026_13785"/>
<dbReference type="PATRIC" id="fig|1411691.4.peg.4255"/>
<dbReference type="EchoBASE" id="EB3964"/>
<dbReference type="eggNOG" id="COG1009">
    <property type="taxonomic scope" value="Bacteria"/>
</dbReference>
<dbReference type="HOGENOM" id="CLU_007100_0_1_6"/>
<dbReference type="InParanoid" id="P77416"/>
<dbReference type="OMA" id="NAWAPDA"/>
<dbReference type="OrthoDB" id="9768329at2"/>
<dbReference type="PhylomeDB" id="P77416"/>
<dbReference type="BioCyc" id="EcoCyc:MONOMER0-141"/>
<dbReference type="PRO" id="PR:P77416"/>
<dbReference type="Proteomes" id="UP000000625">
    <property type="component" value="Chromosome"/>
</dbReference>
<dbReference type="GO" id="GO:0009326">
    <property type="term" value="C:formate dehydrogenase complex"/>
    <property type="evidence" value="ECO:0000303"/>
    <property type="project" value="ComplexPortal"/>
</dbReference>
<dbReference type="GO" id="GO:0016020">
    <property type="term" value="C:membrane"/>
    <property type="evidence" value="ECO:0000303"/>
    <property type="project" value="ComplexPortal"/>
</dbReference>
<dbReference type="GO" id="GO:0005886">
    <property type="term" value="C:plasma membrane"/>
    <property type="evidence" value="ECO:0000255"/>
    <property type="project" value="EcoCyc"/>
</dbReference>
<dbReference type="GO" id="GO:0008137">
    <property type="term" value="F:NADH dehydrogenase (ubiquinone) activity"/>
    <property type="evidence" value="ECO:0007669"/>
    <property type="project" value="InterPro"/>
</dbReference>
<dbReference type="GO" id="GO:0019645">
    <property type="term" value="P:anaerobic electron transport chain"/>
    <property type="evidence" value="ECO:0000303"/>
    <property type="project" value="ComplexPortal"/>
</dbReference>
<dbReference type="GO" id="GO:0009061">
    <property type="term" value="P:anaerobic respiration"/>
    <property type="evidence" value="ECO:0000303"/>
    <property type="project" value="ComplexPortal"/>
</dbReference>
<dbReference type="GO" id="GO:0042773">
    <property type="term" value="P:ATP synthesis coupled electron transport"/>
    <property type="evidence" value="ECO:0007669"/>
    <property type="project" value="InterPro"/>
</dbReference>
<dbReference type="GO" id="GO:0015990">
    <property type="term" value="P:electron transport coupled proton transport"/>
    <property type="evidence" value="ECO:0000318"/>
    <property type="project" value="GO_Central"/>
</dbReference>
<dbReference type="GO" id="GO:0015944">
    <property type="term" value="P:formate oxidation"/>
    <property type="evidence" value="ECO:0000303"/>
    <property type="project" value="ComplexPortal"/>
</dbReference>
<dbReference type="GO" id="GO:0006007">
    <property type="term" value="P:glucose catabolic process"/>
    <property type="evidence" value="ECO:0000303"/>
    <property type="project" value="ComplexPortal"/>
</dbReference>
<dbReference type="InterPro" id="IPR001750">
    <property type="entry name" value="ND/Mrp_TM"/>
</dbReference>
<dbReference type="InterPro" id="IPR003945">
    <property type="entry name" value="NU5C-like"/>
</dbReference>
<dbReference type="InterPro" id="IPR001516">
    <property type="entry name" value="Proton_antipo_N"/>
</dbReference>
<dbReference type="NCBIfam" id="NF005097">
    <property type="entry name" value="PRK06525.1"/>
    <property type="match status" value="1"/>
</dbReference>
<dbReference type="PANTHER" id="PTHR42829">
    <property type="entry name" value="NADH-UBIQUINONE OXIDOREDUCTASE CHAIN 5"/>
    <property type="match status" value="1"/>
</dbReference>
<dbReference type="PANTHER" id="PTHR42829:SF2">
    <property type="entry name" value="NADH-UBIQUINONE OXIDOREDUCTASE CHAIN 5"/>
    <property type="match status" value="1"/>
</dbReference>
<dbReference type="Pfam" id="PF00361">
    <property type="entry name" value="Proton_antipo_M"/>
    <property type="match status" value="1"/>
</dbReference>
<dbReference type="Pfam" id="PF00662">
    <property type="entry name" value="Proton_antipo_N"/>
    <property type="match status" value="1"/>
</dbReference>
<dbReference type="PRINTS" id="PR01434">
    <property type="entry name" value="NADHDHGNASE5"/>
</dbReference>
<reference key="1">
    <citation type="journal article" date="1997" name="Microbiology">
        <title>A 12-cistron Escherichia coli operon (hyf) encoding a putative proton-translocating formate hydrogenlyase system.</title>
        <authorList>
            <person name="Andrews S.C."/>
            <person name="Berks B.C."/>
            <person name="McClay J."/>
            <person name="Ambler A."/>
            <person name="Quail M.A."/>
            <person name="Golby P."/>
            <person name="Guest J.R."/>
        </authorList>
    </citation>
    <scope>NUCLEOTIDE SEQUENCE [GENOMIC DNA]</scope>
    <scope>POSSIBLE FUNCTION</scope>
    <source>
        <strain>K12</strain>
    </source>
</reference>
<reference key="2">
    <citation type="journal article" date="1997" name="DNA Res.">
        <title>Construction of a contiguous 874-kb sequence of the Escherichia coli-K12 genome corresponding to 50.0-68.8 min on the linkage map and analysis of its sequence features.</title>
        <authorList>
            <person name="Yamamoto Y."/>
            <person name="Aiba H."/>
            <person name="Baba T."/>
            <person name="Hayashi K."/>
            <person name="Inada T."/>
            <person name="Isono K."/>
            <person name="Itoh T."/>
            <person name="Kimura S."/>
            <person name="Kitagawa M."/>
            <person name="Makino K."/>
            <person name="Miki T."/>
            <person name="Mitsuhashi N."/>
            <person name="Mizobuchi K."/>
            <person name="Mori H."/>
            <person name="Nakade S."/>
            <person name="Nakamura Y."/>
            <person name="Nashimoto H."/>
            <person name="Oshima T."/>
            <person name="Oyama S."/>
            <person name="Saito N."/>
            <person name="Sampei G."/>
            <person name="Satoh Y."/>
            <person name="Sivasundaram S."/>
            <person name="Tagami H."/>
            <person name="Takahashi H."/>
            <person name="Takeda J."/>
            <person name="Takemoto K."/>
            <person name="Uehara K."/>
            <person name="Wada C."/>
            <person name="Yamagata S."/>
            <person name="Horiuchi T."/>
        </authorList>
    </citation>
    <scope>NUCLEOTIDE SEQUENCE [LARGE SCALE GENOMIC DNA]</scope>
    <source>
        <strain>K12 / W3110 / ATCC 27325 / DSM 5911</strain>
    </source>
</reference>
<reference key="3">
    <citation type="journal article" date="1997" name="Science">
        <title>The complete genome sequence of Escherichia coli K-12.</title>
        <authorList>
            <person name="Blattner F.R."/>
            <person name="Plunkett G. III"/>
            <person name="Bloch C.A."/>
            <person name="Perna N.T."/>
            <person name="Burland V."/>
            <person name="Riley M."/>
            <person name="Collado-Vides J."/>
            <person name="Glasner J.D."/>
            <person name="Rode C.K."/>
            <person name="Mayhew G.F."/>
            <person name="Gregor J."/>
            <person name="Davis N.W."/>
            <person name="Kirkpatrick H.A."/>
            <person name="Goeden M.A."/>
            <person name="Rose D.J."/>
            <person name="Mau B."/>
            <person name="Shao Y."/>
        </authorList>
    </citation>
    <scope>NUCLEOTIDE SEQUENCE [LARGE SCALE GENOMIC DNA]</scope>
    <source>
        <strain>K12 / MG1655 / ATCC 47076</strain>
    </source>
</reference>
<reference key="4">
    <citation type="journal article" date="2006" name="Mol. Syst. Biol.">
        <title>Highly accurate genome sequences of Escherichia coli K-12 strains MG1655 and W3110.</title>
        <authorList>
            <person name="Hayashi K."/>
            <person name="Morooka N."/>
            <person name="Yamamoto Y."/>
            <person name="Fujita K."/>
            <person name="Isono K."/>
            <person name="Choi S."/>
            <person name="Ohtsubo E."/>
            <person name="Baba T."/>
            <person name="Wanner B.L."/>
            <person name="Mori H."/>
            <person name="Horiuchi T."/>
        </authorList>
    </citation>
    <scope>NUCLEOTIDE SEQUENCE [LARGE SCALE GENOMIC DNA]</scope>
    <source>
        <strain>K12 / W3110 / ATCC 27325 / DSM 5911</strain>
    </source>
</reference>
<reference key="5">
    <citation type="journal article" date="2005" name="Science">
        <title>Global topology analysis of the Escherichia coli inner membrane proteome.</title>
        <authorList>
            <person name="Daley D.O."/>
            <person name="Rapp M."/>
            <person name="Granseth E."/>
            <person name="Melen K."/>
            <person name="Drew D."/>
            <person name="von Heijne G."/>
        </authorList>
    </citation>
    <scope>SUBCELLULAR LOCATION</scope>
    <source>
        <strain>K12 / MG1655 / ATCC 47076</strain>
    </source>
</reference>
<evidence type="ECO:0000255" key="1"/>
<evidence type="ECO:0000269" key="2">
    <source>
    </source>
</evidence>
<evidence type="ECO:0000303" key="3">
    <source>
    </source>
</evidence>
<evidence type="ECO:0000305" key="4"/>
<evidence type="ECO:0000305" key="5">
    <source>
    </source>
</evidence>
<feature type="chain" id="PRO_0000118227" description="Hydrogenase-4 component D">
    <location>
        <begin position="1"/>
        <end position="479"/>
    </location>
</feature>
<feature type="transmembrane region" description="Helical" evidence="1">
    <location>
        <begin position="3"/>
        <end position="23"/>
    </location>
</feature>
<feature type="transmembrane region" description="Helical" evidence="1">
    <location>
        <begin position="30"/>
        <end position="50"/>
    </location>
</feature>
<feature type="transmembrane region" description="Helical" evidence="1">
    <location>
        <begin position="55"/>
        <end position="75"/>
    </location>
</feature>
<feature type="transmembrane region" description="Helical" evidence="1">
    <location>
        <begin position="80"/>
        <end position="100"/>
    </location>
</feature>
<feature type="transmembrane region" description="Helical" evidence="1">
    <location>
        <begin position="117"/>
        <end position="137"/>
    </location>
</feature>
<feature type="transmembrane region" description="Helical" evidence="1">
    <location>
        <begin position="168"/>
        <end position="188"/>
    </location>
</feature>
<feature type="transmembrane region" description="Helical" evidence="1">
    <location>
        <begin position="208"/>
        <end position="228"/>
    </location>
</feature>
<feature type="transmembrane region" description="Helical" evidence="1">
    <location>
        <begin position="238"/>
        <end position="258"/>
    </location>
</feature>
<feature type="transmembrane region" description="Helical" evidence="1">
    <location>
        <begin position="270"/>
        <end position="290"/>
    </location>
</feature>
<feature type="transmembrane region" description="Helical" evidence="1">
    <location>
        <begin position="300"/>
        <end position="320"/>
    </location>
</feature>
<feature type="transmembrane region" description="Helical" evidence="1">
    <location>
        <begin position="330"/>
        <end position="350"/>
    </location>
</feature>
<feature type="transmembrane region" description="Helical" evidence="1">
    <location>
        <begin position="369"/>
        <end position="389"/>
    </location>
</feature>
<feature type="transmembrane region" description="Helical" evidence="1">
    <location>
        <begin position="390"/>
        <end position="410"/>
    </location>
</feature>
<feature type="transmembrane region" description="Helical" evidence="1">
    <location>
        <begin position="411"/>
        <end position="431"/>
    </location>
</feature>
<feature type="transmembrane region" description="Helical" evidence="1">
    <location>
        <begin position="458"/>
        <end position="478"/>
    </location>
</feature>
<gene>
    <name evidence="3" type="primary">hyfD</name>
    <name type="ordered locus">b2484</name>
    <name type="ordered locus">JW2469</name>
</gene>
<organism>
    <name type="scientific">Escherichia coli (strain K12)</name>
    <dbReference type="NCBI Taxonomy" id="83333"/>
    <lineage>
        <taxon>Bacteria</taxon>
        <taxon>Pseudomonadati</taxon>
        <taxon>Pseudomonadota</taxon>
        <taxon>Gammaproteobacteria</taxon>
        <taxon>Enterobacterales</taxon>
        <taxon>Enterobacteriaceae</taxon>
        <taxon>Escherichia</taxon>
    </lineage>
</organism>
<accession>P77416</accession>
<accession>P76973</accession>
<sequence>MENLALTTLLLPFIGALVVSFSPQRRAAEWGVLFAALTTLCMLSLISAFYQADKVAVTLTLVNVGDVALFGLVIDRVSTLILFVVVFLGLLVTIYSTGYLTDKNREHPHNGTNRYYAFLLVFIGAMAGLVLSSTLLGQLLFFEITGGCSWALISYYQSDKAQRSALKALLITHIGSLGLYLAAATLFLQTGTFALSAMSELHGDARYLVYGGILFAAWGKSAQLPMQAWLPDAMEAPTPISAYLHAASMVKVGVYIFARAIIDGGNIPHVIGGVGMVMALVTILYGFLMYLPQQDMKRLLAWSTITQLGWMFFGLSLSIFGSRLALEGSIAYIVNHAFAKSLFFLVAGALSYSCGTRLLPRLRGVLHTLPLPGVGFCVAALAITGVPPFNGFFSKFPLFAAGFALSVEYWILLPAMILLMIESVASFAWFIRWFGRVVPGKPSEAVADAAPLPGSMRLVLIVLIVMSLISSVIAATWLQ</sequence>